<reference key="1">
    <citation type="journal article" date="2008" name="J. Bacteriol.">
        <title>Comparative genome sequence analysis of multidrug-resistant Acinetobacter baumannii.</title>
        <authorList>
            <person name="Adams M.D."/>
            <person name="Goglin K."/>
            <person name="Molyneaux N."/>
            <person name="Hujer K.M."/>
            <person name="Lavender H."/>
            <person name="Jamison J.J."/>
            <person name="MacDonald I.J."/>
            <person name="Martin K.M."/>
            <person name="Russo T."/>
            <person name="Campagnari A.A."/>
            <person name="Hujer A.M."/>
            <person name="Bonomo R.A."/>
            <person name="Gill S.R."/>
        </authorList>
    </citation>
    <scope>NUCLEOTIDE SEQUENCE [LARGE SCALE GENOMIC DNA]</scope>
    <source>
        <strain>AB307-0294</strain>
    </source>
</reference>
<sequence>MHPFFQELQQGSQKLGLSLSDEALTLLLKYQDALVLWNKAYNLTAIRDPKEMLVKHLLDSLSILKDLPAGRLLDVGTGGGMPGMIIALCQPERSCVLLDSNGKKIRFLKQFIADLKLKNVIAVQTRVENQDTIDELGQFDVITSRAFASLTDFVEAARPYLHEQSIIAAMKGLIPVEEMEELKQEFSCKVIELHVPRLDEQRHLLLLQRI</sequence>
<comment type="function">
    <text evidence="1">Specifically methylates the N7 position of guanine in position 527 of 16S rRNA.</text>
</comment>
<comment type="catalytic activity">
    <reaction evidence="1">
        <text>guanosine(527) in 16S rRNA + S-adenosyl-L-methionine = N(7)-methylguanosine(527) in 16S rRNA + S-adenosyl-L-homocysteine</text>
        <dbReference type="Rhea" id="RHEA:42732"/>
        <dbReference type="Rhea" id="RHEA-COMP:10209"/>
        <dbReference type="Rhea" id="RHEA-COMP:10210"/>
        <dbReference type="ChEBI" id="CHEBI:57856"/>
        <dbReference type="ChEBI" id="CHEBI:59789"/>
        <dbReference type="ChEBI" id="CHEBI:74269"/>
        <dbReference type="ChEBI" id="CHEBI:74480"/>
        <dbReference type="EC" id="2.1.1.170"/>
    </reaction>
</comment>
<comment type="subcellular location">
    <subcellularLocation>
        <location evidence="1">Cytoplasm</location>
    </subcellularLocation>
</comment>
<comment type="similarity">
    <text evidence="1">Belongs to the methyltransferase superfamily. RNA methyltransferase RsmG family.</text>
</comment>
<dbReference type="EC" id="2.1.1.170" evidence="1"/>
<dbReference type="EMBL" id="CP001172">
    <property type="protein sequence ID" value="ACJ58641.1"/>
    <property type="molecule type" value="Genomic_DNA"/>
</dbReference>
<dbReference type="RefSeq" id="WP_000553193.1">
    <property type="nucleotide sequence ID" value="NZ_CP001172.1"/>
</dbReference>
<dbReference type="SMR" id="B7H3N1"/>
<dbReference type="GeneID" id="92893779"/>
<dbReference type="HOGENOM" id="CLU_065341_2_0_6"/>
<dbReference type="Proteomes" id="UP000006924">
    <property type="component" value="Chromosome"/>
</dbReference>
<dbReference type="GO" id="GO:0005829">
    <property type="term" value="C:cytosol"/>
    <property type="evidence" value="ECO:0007669"/>
    <property type="project" value="TreeGrafter"/>
</dbReference>
<dbReference type="GO" id="GO:0070043">
    <property type="term" value="F:rRNA (guanine-N7-)-methyltransferase activity"/>
    <property type="evidence" value="ECO:0007669"/>
    <property type="project" value="UniProtKB-UniRule"/>
</dbReference>
<dbReference type="Gene3D" id="3.40.50.150">
    <property type="entry name" value="Vaccinia Virus protein VP39"/>
    <property type="match status" value="1"/>
</dbReference>
<dbReference type="HAMAP" id="MF_00074">
    <property type="entry name" value="16SrRNA_methyltr_G"/>
    <property type="match status" value="1"/>
</dbReference>
<dbReference type="InterPro" id="IPR003682">
    <property type="entry name" value="rRNA_ssu_MeTfrase_G"/>
</dbReference>
<dbReference type="InterPro" id="IPR029063">
    <property type="entry name" value="SAM-dependent_MTases_sf"/>
</dbReference>
<dbReference type="NCBIfam" id="TIGR00138">
    <property type="entry name" value="rsmG_gidB"/>
    <property type="match status" value="1"/>
</dbReference>
<dbReference type="PANTHER" id="PTHR31760">
    <property type="entry name" value="S-ADENOSYL-L-METHIONINE-DEPENDENT METHYLTRANSFERASES SUPERFAMILY PROTEIN"/>
    <property type="match status" value="1"/>
</dbReference>
<dbReference type="PANTHER" id="PTHR31760:SF0">
    <property type="entry name" value="S-ADENOSYL-L-METHIONINE-DEPENDENT METHYLTRANSFERASES SUPERFAMILY PROTEIN"/>
    <property type="match status" value="1"/>
</dbReference>
<dbReference type="Pfam" id="PF02527">
    <property type="entry name" value="GidB"/>
    <property type="match status" value="1"/>
</dbReference>
<dbReference type="PIRSF" id="PIRSF003078">
    <property type="entry name" value="GidB"/>
    <property type="match status" value="1"/>
</dbReference>
<dbReference type="SUPFAM" id="SSF53335">
    <property type="entry name" value="S-adenosyl-L-methionine-dependent methyltransferases"/>
    <property type="match status" value="1"/>
</dbReference>
<accession>B7H3N1</accession>
<name>RSMG_ACIB3</name>
<evidence type="ECO:0000255" key="1">
    <source>
        <dbReference type="HAMAP-Rule" id="MF_00074"/>
    </source>
</evidence>
<protein>
    <recommendedName>
        <fullName evidence="1">Ribosomal RNA small subunit methyltransferase G</fullName>
        <ecNumber evidence="1">2.1.1.170</ecNumber>
    </recommendedName>
    <alternativeName>
        <fullName evidence="1">16S rRNA 7-methylguanosine methyltransferase</fullName>
        <shortName evidence="1">16S rRNA m7G methyltransferase</shortName>
    </alternativeName>
</protein>
<proteinExistence type="inferred from homology"/>
<keyword id="KW-0963">Cytoplasm</keyword>
<keyword id="KW-0489">Methyltransferase</keyword>
<keyword id="KW-0698">rRNA processing</keyword>
<keyword id="KW-0949">S-adenosyl-L-methionine</keyword>
<keyword id="KW-0808">Transferase</keyword>
<gene>
    <name evidence="1" type="primary">rsmG</name>
    <name type="ordered locus">ABBFA_001926</name>
</gene>
<feature type="chain" id="PRO_1000117059" description="Ribosomal RNA small subunit methyltransferase G">
    <location>
        <begin position="1"/>
        <end position="210"/>
    </location>
</feature>
<feature type="binding site" evidence="1">
    <location>
        <position position="76"/>
    </location>
    <ligand>
        <name>S-adenosyl-L-methionine</name>
        <dbReference type="ChEBI" id="CHEBI:59789"/>
    </ligand>
</feature>
<feature type="binding site" evidence="1">
    <location>
        <position position="81"/>
    </location>
    <ligand>
        <name>S-adenosyl-L-methionine</name>
        <dbReference type="ChEBI" id="CHEBI:59789"/>
    </ligand>
</feature>
<feature type="binding site" evidence="1">
    <location>
        <begin position="127"/>
        <end position="128"/>
    </location>
    <ligand>
        <name>S-adenosyl-L-methionine</name>
        <dbReference type="ChEBI" id="CHEBI:59789"/>
    </ligand>
</feature>
<feature type="binding site" evidence="1">
    <location>
        <position position="145"/>
    </location>
    <ligand>
        <name>S-adenosyl-L-methionine</name>
        <dbReference type="ChEBI" id="CHEBI:59789"/>
    </ligand>
</feature>
<organism>
    <name type="scientific">Acinetobacter baumannii (strain AB307-0294)</name>
    <dbReference type="NCBI Taxonomy" id="557600"/>
    <lineage>
        <taxon>Bacteria</taxon>
        <taxon>Pseudomonadati</taxon>
        <taxon>Pseudomonadota</taxon>
        <taxon>Gammaproteobacteria</taxon>
        <taxon>Moraxellales</taxon>
        <taxon>Moraxellaceae</taxon>
        <taxon>Acinetobacter</taxon>
        <taxon>Acinetobacter calcoaceticus/baumannii complex</taxon>
    </lineage>
</organism>